<dbReference type="EC" id="3.1.3.16"/>
<dbReference type="EMBL" id="AB106881">
    <property type="protein sequence ID" value="BAF51554.1"/>
    <property type="molecule type" value="mRNA"/>
</dbReference>
<dbReference type="EMBL" id="L17039">
    <property type="protein sequence ID" value="AAA49934.1"/>
    <property type="molecule type" value="mRNA"/>
</dbReference>
<dbReference type="EMBL" id="BC090213">
    <property type="protein sequence ID" value="AAH90213.1"/>
    <property type="molecule type" value="mRNA"/>
</dbReference>
<dbReference type="RefSeq" id="NP_001081308.1">
    <property type="nucleotide sequence ID" value="NM_001087839.1"/>
</dbReference>
<dbReference type="SMR" id="P36874"/>
<dbReference type="IntAct" id="P36874">
    <property type="interactions" value="2"/>
</dbReference>
<dbReference type="MINT" id="P36874"/>
<dbReference type="DNASU" id="397767"/>
<dbReference type="GeneID" id="397767"/>
<dbReference type="KEGG" id="xla:397767"/>
<dbReference type="AGR" id="Xenbase:XB-GENE-967940"/>
<dbReference type="CTD" id="397767"/>
<dbReference type="Xenbase" id="XB-GENE-967940">
    <property type="gene designation" value="ppp1cc.L"/>
</dbReference>
<dbReference type="OMA" id="EEHEIRY"/>
<dbReference type="OrthoDB" id="1930084at2759"/>
<dbReference type="Proteomes" id="UP000186698">
    <property type="component" value="Chromosome 1L"/>
</dbReference>
<dbReference type="Bgee" id="397767">
    <property type="expression patterns" value="Expressed in egg cell and 19 other cell types or tissues"/>
</dbReference>
<dbReference type="GO" id="GO:0032154">
    <property type="term" value="C:cleavage furrow"/>
    <property type="evidence" value="ECO:0007669"/>
    <property type="project" value="UniProtKB-SubCell"/>
</dbReference>
<dbReference type="GO" id="GO:0005737">
    <property type="term" value="C:cytoplasm"/>
    <property type="evidence" value="ECO:0000318"/>
    <property type="project" value="GO_Central"/>
</dbReference>
<dbReference type="GO" id="GO:0000776">
    <property type="term" value="C:kinetochore"/>
    <property type="evidence" value="ECO:0007669"/>
    <property type="project" value="UniProtKB-KW"/>
</dbReference>
<dbReference type="GO" id="GO:0016020">
    <property type="term" value="C:membrane"/>
    <property type="evidence" value="ECO:0000314"/>
    <property type="project" value="UniProtKB"/>
</dbReference>
<dbReference type="GO" id="GO:0030496">
    <property type="term" value="C:midbody"/>
    <property type="evidence" value="ECO:0007669"/>
    <property type="project" value="UniProtKB-SubCell"/>
</dbReference>
<dbReference type="GO" id="GO:0005739">
    <property type="term" value="C:mitochondrion"/>
    <property type="evidence" value="ECO:0000250"/>
    <property type="project" value="UniProtKB"/>
</dbReference>
<dbReference type="GO" id="GO:0016607">
    <property type="term" value="C:nuclear speck"/>
    <property type="evidence" value="ECO:0007669"/>
    <property type="project" value="UniProtKB-SubCell"/>
</dbReference>
<dbReference type="GO" id="GO:0005730">
    <property type="term" value="C:nucleolus"/>
    <property type="evidence" value="ECO:0007669"/>
    <property type="project" value="UniProtKB-SubCell"/>
</dbReference>
<dbReference type="GO" id="GO:0005634">
    <property type="term" value="C:nucleus"/>
    <property type="evidence" value="ECO:0000318"/>
    <property type="project" value="GO_Central"/>
</dbReference>
<dbReference type="GO" id="GO:0046872">
    <property type="term" value="F:metal ion binding"/>
    <property type="evidence" value="ECO:0007669"/>
    <property type="project" value="UniProtKB-KW"/>
</dbReference>
<dbReference type="GO" id="GO:0004722">
    <property type="term" value="F:protein serine/threonine phosphatase activity"/>
    <property type="evidence" value="ECO:0000314"/>
    <property type="project" value="UniProtKB"/>
</dbReference>
<dbReference type="GO" id="GO:0051301">
    <property type="term" value="P:cell division"/>
    <property type="evidence" value="ECO:0007669"/>
    <property type="project" value="UniProtKB-KW"/>
</dbReference>
<dbReference type="GO" id="GO:0005977">
    <property type="term" value="P:glycogen metabolic process"/>
    <property type="evidence" value="ECO:0007669"/>
    <property type="project" value="UniProtKB-KW"/>
</dbReference>
<dbReference type="GO" id="GO:0007084">
    <property type="term" value="P:mitotic nuclear membrane reassembly"/>
    <property type="evidence" value="ECO:0000315"/>
    <property type="project" value="UniProtKB"/>
</dbReference>
<dbReference type="GO" id="GO:0006470">
    <property type="term" value="P:protein dephosphorylation"/>
    <property type="evidence" value="ECO:0000314"/>
    <property type="project" value="UniProtKB"/>
</dbReference>
<dbReference type="CDD" id="cd07414">
    <property type="entry name" value="MPP_PP1_PPKL"/>
    <property type="match status" value="1"/>
</dbReference>
<dbReference type="FunFam" id="3.60.21.10:FF:000004">
    <property type="entry name" value="Serine/threonine-protein phosphatase"/>
    <property type="match status" value="1"/>
</dbReference>
<dbReference type="Gene3D" id="3.60.21.10">
    <property type="match status" value="1"/>
</dbReference>
<dbReference type="InterPro" id="IPR004843">
    <property type="entry name" value="Calcineurin-like_PHP_ApaH"/>
</dbReference>
<dbReference type="InterPro" id="IPR029052">
    <property type="entry name" value="Metallo-depent_PP-like"/>
</dbReference>
<dbReference type="InterPro" id="IPR050341">
    <property type="entry name" value="PP1_catalytic_subunit"/>
</dbReference>
<dbReference type="InterPro" id="IPR006186">
    <property type="entry name" value="Ser/Thr-sp_prot-phosphatase"/>
</dbReference>
<dbReference type="InterPro" id="IPR031675">
    <property type="entry name" value="STPPase_N"/>
</dbReference>
<dbReference type="PANTHER" id="PTHR11668">
    <property type="entry name" value="SERINE/THREONINE PROTEIN PHOSPHATASE"/>
    <property type="match status" value="1"/>
</dbReference>
<dbReference type="PANTHER" id="PTHR11668:SF300">
    <property type="entry name" value="SERINE_THREONINE-PROTEIN PHOSPHATASE"/>
    <property type="match status" value="1"/>
</dbReference>
<dbReference type="Pfam" id="PF00149">
    <property type="entry name" value="Metallophos"/>
    <property type="match status" value="1"/>
</dbReference>
<dbReference type="Pfam" id="PF16891">
    <property type="entry name" value="STPPase_N"/>
    <property type="match status" value="1"/>
</dbReference>
<dbReference type="PRINTS" id="PR00114">
    <property type="entry name" value="STPHPHTASE"/>
</dbReference>
<dbReference type="SMART" id="SM00156">
    <property type="entry name" value="PP2Ac"/>
    <property type="match status" value="1"/>
</dbReference>
<dbReference type="SUPFAM" id="SSF56300">
    <property type="entry name" value="Metallo-dependent phosphatases"/>
    <property type="match status" value="1"/>
</dbReference>
<dbReference type="PROSITE" id="PS00125">
    <property type="entry name" value="SER_THR_PHOSPHATASE"/>
    <property type="match status" value="1"/>
</dbReference>
<name>PP1GA_XENLA</name>
<accession>P36874</accession>
<accession>Q5EAX1</accession>
<gene>
    <name type="primary">ppp1cc-a</name>
    <name type="synonym">ppp1cc</name>
</gene>
<proteinExistence type="evidence at protein level"/>
<reference key="1">
    <citation type="journal article" date="2007" name="Exp. Cell Res.">
        <title>Nuclear envelope precursor vesicle targeting to chromatin is stimulated by protein phosphatase 1 in Xenopus egg extracts.</title>
        <authorList>
            <person name="Ito H."/>
            <person name="Koyama Y."/>
            <person name="Takano M."/>
            <person name="Ishii K."/>
            <person name="Maeno M."/>
            <person name="Furukawa K."/>
            <person name="Horigome T."/>
        </authorList>
    </citation>
    <scope>NUCLEOTIDE SEQUENCE [MRNA]</scope>
    <scope>FUNCTION</scope>
    <scope>CATALYTIC ACTIVITY</scope>
    <scope>SUBCELLULAR LOCATION</scope>
    <source>
        <tissue>Oocyte</tissue>
    </source>
</reference>
<reference key="2">
    <citation type="submission" date="1993-09" db="EMBL/GenBank/DDBJ databases">
        <title>The C-terminus of Xenopus protein phosphatase 1-gamma1 determines its cell cycle-dependent regulation and phosphorylation.</title>
        <authorList>
            <person name="Walker D.H."/>
            <person name="Rempel R."/>
            <person name="Maller J.L."/>
        </authorList>
    </citation>
    <scope>NUCLEOTIDE SEQUENCE [MRNA]</scope>
</reference>
<reference key="3">
    <citation type="submission" date="2005-02" db="EMBL/GenBank/DDBJ databases">
        <authorList>
            <consortium name="NIH - Xenopus Gene Collection (XGC) project"/>
        </authorList>
    </citation>
    <scope>NUCLEOTIDE SEQUENCE [LARGE SCALE MRNA]</scope>
    <source>
        <tissue>Egg</tissue>
    </source>
</reference>
<feature type="chain" id="PRO_0000058790" description="Serine/threonine-protein phosphatase PP1-gamma catalytic subunit A">
    <location>
        <begin position="1"/>
        <end position="323"/>
    </location>
</feature>
<feature type="region of interest" description="Disordered" evidence="2">
    <location>
        <begin position="300"/>
        <end position="323"/>
    </location>
</feature>
<feature type="active site" description="Proton donor" evidence="1">
    <location>
        <position position="125"/>
    </location>
</feature>
<feature type="binding site" evidence="1">
    <location>
        <position position="64"/>
    </location>
    <ligand>
        <name>Mn(2+)</name>
        <dbReference type="ChEBI" id="CHEBI:29035"/>
        <label>1</label>
    </ligand>
</feature>
<feature type="binding site" evidence="1">
    <location>
        <position position="66"/>
    </location>
    <ligand>
        <name>Mn(2+)</name>
        <dbReference type="ChEBI" id="CHEBI:29035"/>
        <label>1</label>
    </ligand>
</feature>
<feature type="binding site" evidence="1">
    <location>
        <position position="92"/>
    </location>
    <ligand>
        <name>Mn(2+)</name>
        <dbReference type="ChEBI" id="CHEBI:29035"/>
        <label>1</label>
    </ligand>
</feature>
<feature type="binding site" evidence="1">
    <location>
        <position position="92"/>
    </location>
    <ligand>
        <name>Mn(2+)</name>
        <dbReference type="ChEBI" id="CHEBI:29035"/>
        <label>2</label>
    </ligand>
</feature>
<feature type="binding site" evidence="1">
    <location>
        <position position="124"/>
    </location>
    <ligand>
        <name>Mn(2+)</name>
        <dbReference type="ChEBI" id="CHEBI:29035"/>
        <label>2</label>
    </ligand>
</feature>
<feature type="binding site" evidence="1">
    <location>
        <position position="173"/>
    </location>
    <ligand>
        <name>Mn(2+)</name>
        <dbReference type="ChEBI" id="CHEBI:29035"/>
        <label>2</label>
    </ligand>
</feature>
<feature type="binding site" evidence="1">
    <location>
        <position position="248"/>
    </location>
    <ligand>
        <name>Mn(2+)</name>
        <dbReference type="ChEBI" id="CHEBI:29035"/>
        <label>2</label>
    </ligand>
</feature>
<feature type="sequence conflict" description="In Ref. 2; AAA49934." evidence="4" ref="2">
    <original>V</original>
    <variation>I</variation>
    <location>
        <position position="213"/>
    </location>
</feature>
<feature type="sequence conflict" description="In Ref. 2; AAA49934." evidence="4" ref="2">
    <original>D</original>
    <variation>Y</variation>
    <location>
        <position position="220"/>
    </location>
</feature>
<comment type="function">
    <text evidence="1 3">Protein phosphatase that associates with over 200 regulatory proteins to form highly specific holoenzymes which dephosphorylate hundreds of biological targets. Protein phosphatase 1 (PP1) is essential for cell division, and participates in the regulation of glycogen metabolism, muscle contractility and protein synthesis (By similarity). Promotes nuclear envelope reassembly by targeting nuclear membrane vesicles to chromatin at the end of mitosis. Acts by dephosphorylating membrane proteins such as lamin B receptor (lbr) to regulate the binding of membrane proteins to chromatin.</text>
</comment>
<comment type="catalytic activity">
    <reaction evidence="3">
        <text>O-phospho-L-seryl-[protein] + H2O = L-seryl-[protein] + phosphate</text>
        <dbReference type="Rhea" id="RHEA:20629"/>
        <dbReference type="Rhea" id="RHEA-COMP:9863"/>
        <dbReference type="Rhea" id="RHEA-COMP:11604"/>
        <dbReference type="ChEBI" id="CHEBI:15377"/>
        <dbReference type="ChEBI" id="CHEBI:29999"/>
        <dbReference type="ChEBI" id="CHEBI:43474"/>
        <dbReference type="ChEBI" id="CHEBI:83421"/>
        <dbReference type="EC" id="3.1.3.16"/>
    </reaction>
</comment>
<comment type="catalytic activity">
    <reaction evidence="3">
        <text>O-phospho-L-threonyl-[protein] + H2O = L-threonyl-[protein] + phosphate</text>
        <dbReference type="Rhea" id="RHEA:47004"/>
        <dbReference type="Rhea" id="RHEA-COMP:11060"/>
        <dbReference type="Rhea" id="RHEA-COMP:11605"/>
        <dbReference type="ChEBI" id="CHEBI:15377"/>
        <dbReference type="ChEBI" id="CHEBI:30013"/>
        <dbReference type="ChEBI" id="CHEBI:43474"/>
        <dbReference type="ChEBI" id="CHEBI:61977"/>
        <dbReference type="EC" id="3.1.3.16"/>
    </reaction>
</comment>
<comment type="cofactor">
    <cofactor evidence="1">
        <name>Mn(2+)</name>
        <dbReference type="ChEBI" id="CHEBI:29035"/>
    </cofactor>
    <text evidence="1">Binds 2 manganese ions per subunit.</text>
</comment>
<comment type="subunit">
    <text evidence="1">PP1 comprises a catalytic subunit, ppp1c1, ppp1cb or ppp1cc, which is folded into its native form by inhibitor 2 and glycogen synthetase kinase 3, and then is complexed to one or several targeting or regulatory subunits.</text>
</comment>
<comment type="interaction">
    <interactant intactId="EBI-2908704">
        <id>P36874</id>
    </interactant>
    <interactant intactId="EBI-7207360">
        <id>Q9IB67</id>
        <label>casp2.L</label>
    </interactant>
    <organismsDiffer>false</organismsDiffer>
    <experiments>2</experiments>
</comment>
<comment type="interaction">
    <interactant intactId="EBI-2908704">
        <id>P36874</id>
    </interactant>
    <interactant intactId="EBI-2607221">
        <id>O42263</id>
        <label>XCENP-E</label>
    </interactant>
    <organismsDiffer>false</organismsDiffer>
    <experiments>2</experiments>
</comment>
<comment type="subcellular location">
    <subcellularLocation>
        <location evidence="3">Cytoplasm</location>
    </subcellularLocation>
    <subcellularLocation>
        <location evidence="1">Nucleus</location>
    </subcellularLocation>
    <subcellularLocation>
        <location evidence="1">Nucleus</location>
        <location evidence="1">Nucleolus</location>
    </subcellularLocation>
    <subcellularLocation>
        <location evidence="1">Cleavage furrow</location>
    </subcellularLocation>
    <subcellularLocation>
        <location evidence="1">Nucleus</location>
        <location evidence="1">Nucleoplasm</location>
    </subcellularLocation>
    <subcellularLocation>
        <location evidence="1">Chromosome</location>
        <location evidence="1">Centromere</location>
        <location evidence="1">Kinetochore</location>
    </subcellularLocation>
    <subcellularLocation>
        <location evidence="1">Nucleus speckle</location>
    </subcellularLocation>
    <subcellularLocation>
        <location evidence="1">Midbody</location>
    </subcellularLocation>
    <subcellularLocation>
        <location evidence="1">Mitochondrion</location>
    </subcellularLocation>
    <subcellularLocation>
        <location evidence="3">Membrane</location>
    </subcellularLocation>
</comment>
<comment type="similarity">
    <text evidence="4">Belongs to the PPP phosphatase family. PP-1 subfamily.</text>
</comment>
<keyword id="KW-0119">Carbohydrate metabolism</keyword>
<keyword id="KW-0131">Cell cycle</keyword>
<keyword id="KW-0132">Cell division</keyword>
<keyword id="KW-0137">Centromere</keyword>
<keyword id="KW-0158">Chromosome</keyword>
<keyword id="KW-0963">Cytoplasm</keyword>
<keyword id="KW-0321">Glycogen metabolism</keyword>
<keyword id="KW-0378">Hydrolase</keyword>
<keyword id="KW-0995">Kinetochore</keyword>
<keyword id="KW-0464">Manganese</keyword>
<keyword id="KW-0472">Membrane</keyword>
<keyword id="KW-0479">Metal-binding</keyword>
<keyword id="KW-0496">Mitochondrion</keyword>
<keyword id="KW-0498">Mitosis</keyword>
<keyword id="KW-0539">Nucleus</keyword>
<keyword id="KW-0904">Protein phosphatase</keyword>
<keyword id="KW-1185">Reference proteome</keyword>
<protein>
    <recommendedName>
        <fullName>Serine/threonine-protein phosphatase PP1-gamma catalytic subunit A</fullName>
        <shortName>PP-1G-A</shortName>
        <shortName>xPP1-gamma1</shortName>
        <ecNumber>3.1.3.16</ecNumber>
    </recommendedName>
</protein>
<sequence length="323" mass="36956">MADVDKLNIDSIIQRLLEVRGSKPGKNVQLQENEIRGLCLKSREIFLSQPILLELEAPLKICGDIHGQYYDLLRLFEYGGFPPESNYLFLGDYVDRGKQSLETICLLLAYKIKYPENFFLLRGNHECASINRIYGFYDECKRRYNIKLWKTFTDCFNCLPIAAIVDEKIFCCHGGLSPDLQSMEQIRRIMRPTDVPDQGLLCDLLWSDPDKDVLGWGENDRGVSFTFGAEVVAKFLHKHDLDLICRAHQVVEDGYEFFAKRQLVTLFSAPNYCGEFDNAGAMMSVDETLMCSFQILKPAEKKKPNASRPVTPPRGMITKQAKK</sequence>
<evidence type="ECO:0000250" key="1"/>
<evidence type="ECO:0000256" key="2">
    <source>
        <dbReference type="SAM" id="MobiDB-lite"/>
    </source>
</evidence>
<evidence type="ECO:0000269" key="3">
    <source>
    </source>
</evidence>
<evidence type="ECO:0000305" key="4"/>
<organism>
    <name type="scientific">Xenopus laevis</name>
    <name type="common">African clawed frog</name>
    <dbReference type="NCBI Taxonomy" id="8355"/>
    <lineage>
        <taxon>Eukaryota</taxon>
        <taxon>Metazoa</taxon>
        <taxon>Chordata</taxon>
        <taxon>Craniata</taxon>
        <taxon>Vertebrata</taxon>
        <taxon>Euteleostomi</taxon>
        <taxon>Amphibia</taxon>
        <taxon>Batrachia</taxon>
        <taxon>Anura</taxon>
        <taxon>Pipoidea</taxon>
        <taxon>Pipidae</taxon>
        <taxon>Xenopodinae</taxon>
        <taxon>Xenopus</taxon>
        <taxon>Xenopus</taxon>
    </lineage>
</organism>